<organism>
    <name type="scientific">Zinnia elegans</name>
    <name type="common">Garden zinnia</name>
    <name type="synonym">Zinnia violacea</name>
    <dbReference type="NCBI Taxonomy" id="34245"/>
    <lineage>
        <taxon>Eukaryota</taxon>
        <taxon>Viridiplantae</taxon>
        <taxon>Streptophyta</taxon>
        <taxon>Embryophyta</taxon>
        <taxon>Tracheophyta</taxon>
        <taxon>Spermatophyta</taxon>
        <taxon>Magnoliopsida</taxon>
        <taxon>eudicotyledons</taxon>
        <taxon>Gunneridae</taxon>
        <taxon>Pentapetalae</taxon>
        <taxon>asterids</taxon>
        <taxon>campanulids</taxon>
        <taxon>Asterales</taxon>
        <taxon>Asteraceae</taxon>
        <taxon>Asteroideae</taxon>
        <taxon>Heliantheae alliance</taxon>
        <taxon>Heliantheae</taxon>
        <taxon>Zinnia</taxon>
    </lineage>
</organism>
<feature type="chain" id="PRO_0000341527" description="Unknown protein 4">
    <location>
        <begin position="1" status="less than"/>
        <end position="8" status="greater than"/>
    </location>
</feature>
<feature type="non-terminal residue">
    <location>
        <position position="1"/>
    </location>
</feature>
<feature type="non-terminal residue">
    <location>
        <position position="8"/>
    </location>
</feature>
<proteinExistence type="evidence at protein level"/>
<name>UP04_ZINEL</name>
<protein>
    <recommendedName>
        <fullName>Unknown protein 4</fullName>
    </recommendedName>
</protein>
<keyword id="KW-0903">Direct protein sequencing</keyword>
<reference evidence="1" key="1">
    <citation type="submission" date="2007-12" db="UniProtKB">
        <authorList>
            <person name="Gabaldon C."/>
            <person name="Gomez Ros L.V."/>
            <person name="Novo Uzal E."/>
            <person name="Ros Barcelo A."/>
        </authorList>
    </citation>
    <scope>PROTEIN SEQUENCE</scope>
    <source>
        <strain>cv. Envy</strain>
        <tissue>Callus</tissue>
    </source>
</reference>
<evidence type="ECO:0000305" key="1"/>
<accession>P85416</accession>
<sequence length="8" mass="940">PSATYFVR</sequence>